<accession>C1CQQ0</accession>
<name>PDXS_STRZT</name>
<gene>
    <name evidence="1" type="primary">pdxS</name>
    <name type="ordered locus">SPT_0807</name>
</gene>
<dbReference type="EC" id="4.3.3.6" evidence="1"/>
<dbReference type="EMBL" id="CP000921">
    <property type="protein sequence ID" value="ACO23901.1"/>
    <property type="molecule type" value="Genomic_DNA"/>
</dbReference>
<dbReference type="RefSeq" id="WP_000138517.1">
    <property type="nucleotide sequence ID" value="NC_012469.1"/>
</dbReference>
<dbReference type="SMR" id="C1CQQ0"/>
<dbReference type="GeneID" id="45653282"/>
<dbReference type="KEGG" id="snt:SPT_0807"/>
<dbReference type="HOGENOM" id="CLU_055352_1_0_9"/>
<dbReference type="UniPathway" id="UPA00245"/>
<dbReference type="GO" id="GO:0036381">
    <property type="term" value="F:pyridoxal 5'-phosphate synthase (glutamine hydrolysing) activity"/>
    <property type="evidence" value="ECO:0007669"/>
    <property type="project" value="UniProtKB-UniRule"/>
</dbReference>
<dbReference type="GO" id="GO:0006520">
    <property type="term" value="P:amino acid metabolic process"/>
    <property type="evidence" value="ECO:0007669"/>
    <property type="project" value="TreeGrafter"/>
</dbReference>
<dbReference type="GO" id="GO:0042823">
    <property type="term" value="P:pyridoxal phosphate biosynthetic process"/>
    <property type="evidence" value="ECO:0007669"/>
    <property type="project" value="UniProtKB-UniRule"/>
</dbReference>
<dbReference type="GO" id="GO:0008615">
    <property type="term" value="P:pyridoxine biosynthetic process"/>
    <property type="evidence" value="ECO:0007669"/>
    <property type="project" value="TreeGrafter"/>
</dbReference>
<dbReference type="CDD" id="cd04727">
    <property type="entry name" value="pdxS"/>
    <property type="match status" value="1"/>
</dbReference>
<dbReference type="FunFam" id="3.20.20.70:FF:000001">
    <property type="entry name" value="Pyridoxine biosynthesis protein PDX1"/>
    <property type="match status" value="1"/>
</dbReference>
<dbReference type="Gene3D" id="3.20.20.70">
    <property type="entry name" value="Aldolase class I"/>
    <property type="match status" value="1"/>
</dbReference>
<dbReference type="HAMAP" id="MF_01824">
    <property type="entry name" value="PdxS"/>
    <property type="match status" value="1"/>
</dbReference>
<dbReference type="InterPro" id="IPR013785">
    <property type="entry name" value="Aldolase_TIM"/>
</dbReference>
<dbReference type="InterPro" id="IPR001852">
    <property type="entry name" value="PdxS/SNZ"/>
</dbReference>
<dbReference type="InterPro" id="IPR033755">
    <property type="entry name" value="PdxS/SNZ_N"/>
</dbReference>
<dbReference type="InterPro" id="IPR011060">
    <property type="entry name" value="RibuloseP-bd_barrel"/>
</dbReference>
<dbReference type="NCBIfam" id="NF003215">
    <property type="entry name" value="PRK04180.1"/>
    <property type="match status" value="1"/>
</dbReference>
<dbReference type="NCBIfam" id="TIGR00343">
    <property type="entry name" value="pyridoxal 5'-phosphate synthase lyase subunit PdxS"/>
    <property type="match status" value="1"/>
</dbReference>
<dbReference type="PANTHER" id="PTHR31829">
    <property type="entry name" value="PYRIDOXAL 5'-PHOSPHATE SYNTHASE SUBUNIT SNZ1-RELATED"/>
    <property type="match status" value="1"/>
</dbReference>
<dbReference type="PANTHER" id="PTHR31829:SF0">
    <property type="entry name" value="PYRIDOXAL 5'-PHOSPHATE SYNTHASE SUBUNIT SNZ1-RELATED"/>
    <property type="match status" value="1"/>
</dbReference>
<dbReference type="Pfam" id="PF01680">
    <property type="entry name" value="SOR_SNZ"/>
    <property type="match status" value="1"/>
</dbReference>
<dbReference type="PIRSF" id="PIRSF029271">
    <property type="entry name" value="Pdx1"/>
    <property type="match status" value="1"/>
</dbReference>
<dbReference type="SUPFAM" id="SSF51366">
    <property type="entry name" value="Ribulose-phoshate binding barrel"/>
    <property type="match status" value="1"/>
</dbReference>
<dbReference type="PROSITE" id="PS01235">
    <property type="entry name" value="PDXS_SNZ_1"/>
    <property type="match status" value="1"/>
</dbReference>
<dbReference type="PROSITE" id="PS51129">
    <property type="entry name" value="PDXS_SNZ_2"/>
    <property type="match status" value="1"/>
</dbReference>
<sequence length="291" mass="31741">MTENRYELNKNLAQMLKGGVIMDVQNPEQARIAEAAGAAAVMALERIPADIRAAGGVSRMSDPKMIKEIQEAVSIPVMAKVRIGHFVEAQILEAIEIDYIDESEVLSPADDRFHVDKKEFQVPFVCGAKDLGEALRRIAEGASMIRTKGEPGTGDIVQAVRHMRMMNQEIRRIQNLREDELYVAAKDLQVPVELVQYVHEHGKLPVVNFAAGGVATPADAALMMQLGAEGVFVGSGIFKSGDPVKRASAIVKAVTNFRNPQILAQISEDLGEAMVGINENEIQILMAERGK</sequence>
<protein>
    <recommendedName>
        <fullName evidence="1">Pyridoxal 5'-phosphate synthase subunit PdxS</fullName>
        <shortName evidence="1">PLP synthase subunit PdxS</shortName>
        <ecNumber evidence="1">4.3.3.6</ecNumber>
    </recommendedName>
    <alternativeName>
        <fullName evidence="1">Pdx1</fullName>
    </alternativeName>
</protein>
<comment type="function">
    <text evidence="1">Catalyzes the formation of pyridoxal 5'-phosphate from ribose 5-phosphate (RBP), glyceraldehyde 3-phosphate (G3P) and ammonia. The ammonia is provided by the PdxT subunit. Can also use ribulose 5-phosphate and dihydroxyacetone phosphate as substrates, resulting from enzyme-catalyzed isomerization of RBP and G3P, respectively.</text>
</comment>
<comment type="catalytic activity">
    <reaction evidence="1">
        <text>aldehydo-D-ribose 5-phosphate + D-glyceraldehyde 3-phosphate + L-glutamine = pyridoxal 5'-phosphate + L-glutamate + phosphate + 3 H2O + H(+)</text>
        <dbReference type="Rhea" id="RHEA:31507"/>
        <dbReference type="ChEBI" id="CHEBI:15377"/>
        <dbReference type="ChEBI" id="CHEBI:15378"/>
        <dbReference type="ChEBI" id="CHEBI:29985"/>
        <dbReference type="ChEBI" id="CHEBI:43474"/>
        <dbReference type="ChEBI" id="CHEBI:58273"/>
        <dbReference type="ChEBI" id="CHEBI:58359"/>
        <dbReference type="ChEBI" id="CHEBI:59776"/>
        <dbReference type="ChEBI" id="CHEBI:597326"/>
        <dbReference type="EC" id="4.3.3.6"/>
    </reaction>
</comment>
<comment type="pathway">
    <text evidence="1">Cofactor biosynthesis; pyridoxal 5'-phosphate biosynthesis.</text>
</comment>
<comment type="subunit">
    <text evidence="1">In the presence of PdxT, forms a dodecamer of heterodimers.</text>
</comment>
<comment type="similarity">
    <text evidence="1">Belongs to the PdxS/SNZ family.</text>
</comment>
<keyword id="KW-0456">Lyase</keyword>
<keyword id="KW-0663">Pyridoxal phosphate</keyword>
<keyword id="KW-0704">Schiff base</keyword>
<proteinExistence type="inferred from homology"/>
<feature type="chain" id="PRO_1000188246" description="Pyridoxal 5'-phosphate synthase subunit PdxS">
    <location>
        <begin position="1"/>
        <end position="291"/>
    </location>
</feature>
<feature type="active site" description="Schiff-base intermediate with D-ribose 5-phosphate" evidence="1">
    <location>
        <position position="80"/>
    </location>
</feature>
<feature type="binding site" evidence="1">
    <location>
        <position position="23"/>
    </location>
    <ligand>
        <name>D-ribose 5-phosphate</name>
        <dbReference type="ChEBI" id="CHEBI:78346"/>
    </ligand>
</feature>
<feature type="binding site" evidence="1">
    <location>
        <position position="152"/>
    </location>
    <ligand>
        <name>D-ribose 5-phosphate</name>
        <dbReference type="ChEBI" id="CHEBI:78346"/>
    </ligand>
</feature>
<feature type="binding site" evidence="1">
    <location>
        <position position="164"/>
    </location>
    <ligand>
        <name>D-glyceraldehyde 3-phosphate</name>
        <dbReference type="ChEBI" id="CHEBI:59776"/>
    </ligand>
</feature>
<feature type="binding site" evidence="1">
    <location>
        <position position="213"/>
    </location>
    <ligand>
        <name>D-ribose 5-phosphate</name>
        <dbReference type="ChEBI" id="CHEBI:78346"/>
    </ligand>
</feature>
<feature type="binding site" evidence="1">
    <location>
        <begin position="234"/>
        <end position="235"/>
    </location>
    <ligand>
        <name>D-ribose 5-phosphate</name>
        <dbReference type="ChEBI" id="CHEBI:78346"/>
    </ligand>
</feature>
<evidence type="ECO:0000255" key="1">
    <source>
        <dbReference type="HAMAP-Rule" id="MF_01824"/>
    </source>
</evidence>
<reference key="1">
    <citation type="journal article" date="2010" name="Genome Biol.">
        <title>Structure and dynamics of the pan-genome of Streptococcus pneumoniae and closely related species.</title>
        <authorList>
            <person name="Donati C."/>
            <person name="Hiller N.L."/>
            <person name="Tettelin H."/>
            <person name="Muzzi A."/>
            <person name="Croucher N.J."/>
            <person name="Angiuoli S.V."/>
            <person name="Oggioni M."/>
            <person name="Dunning Hotopp J.C."/>
            <person name="Hu F.Z."/>
            <person name="Riley D.R."/>
            <person name="Covacci A."/>
            <person name="Mitchell T.J."/>
            <person name="Bentley S.D."/>
            <person name="Kilian M."/>
            <person name="Ehrlich G.D."/>
            <person name="Rappuoli R."/>
            <person name="Moxon E.R."/>
            <person name="Masignani V."/>
        </authorList>
    </citation>
    <scope>NUCLEOTIDE SEQUENCE [LARGE SCALE GENOMIC DNA]</scope>
    <source>
        <strain>Taiwan19F-14</strain>
    </source>
</reference>
<organism>
    <name type="scientific">Streptococcus pneumoniae (strain Taiwan19F-14)</name>
    <dbReference type="NCBI Taxonomy" id="487213"/>
    <lineage>
        <taxon>Bacteria</taxon>
        <taxon>Bacillati</taxon>
        <taxon>Bacillota</taxon>
        <taxon>Bacilli</taxon>
        <taxon>Lactobacillales</taxon>
        <taxon>Streptococcaceae</taxon>
        <taxon>Streptococcus</taxon>
    </lineage>
</organism>